<reference key="1">
    <citation type="submission" date="2007-04" db="EMBL/GenBank/DDBJ databases">
        <title>Complete sequence of Roseiflexus sp. RS-1.</title>
        <authorList>
            <consortium name="US DOE Joint Genome Institute"/>
            <person name="Copeland A."/>
            <person name="Lucas S."/>
            <person name="Lapidus A."/>
            <person name="Barry K."/>
            <person name="Detter J.C."/>
            <person name="Glavina del Rio T."/>
            <person name="Hammon N."/>
            <person name="Israni S."/>
            <person name="Dalin E."/>
            <person name="Tice H."/>
            <person name="Pitluck S."/>
            <person name="Chertkov O."/>
            <person name="Brettin T."/>
            <person name="Bruce D."/>
            <person name="Han C."/>
            <person name="Schmutz J."/>
            <person name="Larimer F."/>
            <person name="Land M."/>
            <person name="Hauser L."/>
            <person name="Kyrpides N."/>
            <person name="Mikhailova N."/>
            <person name="Bryant D.A."/>
            <person name="Richardson P."/>
        </authorList>
    </citation>
    <scope>NUCLEOTIDE SEQUENCE [LARGE SCALE GENOMIC DNA]</scope>
    <source>
        <strain>RS-1</strain>
    </source>
</reference>
<accession>A5UU37</accession>
<feature type="chain" id="PRO_1000047764" description="Porphobilinogen deaminase">
    <location>
        <begin position="1"/>
        <end position="303"/>
    </location>
</feature>
<feature type="modified residue" description="S-(dipyrrolylmethanemethyl)cysteine" evidence="1">
    <location>
        <position position="241"/>
    </location>
</feature>
<name>HEM3_ROSS1</name>
<evidence type="ECO:0000255" key="1">
    <source>
        <dbReference type="HAMAP-Rule" id="MF_00260"/>
    </source>
</evidence>
<organism>
    <name type="scientific">Roseiflexus sp. (strain RS-1)</name>
    <dbReference type="NCBI Taxonomy" id="357808"/>
    <lineage>
        <taxon>Bacteria</taxon>
        <taxon>Bacillati</taxon>
        <taxon>Chloroflexota</taxon>
        <taxon>Chloroflexia</taxon>
        <taxon>Chloroflexales</taxon>
        <taxon>Roseiflexineae</taxon>
        <taxon>Roseiflexaceae</taxon>
        <taxon>Roseiflexus</taxon>
    </lineage>
</organism>
<sequence>MKQTLIIGTRASKLALVQTYMVRDALQSAHPGLTVAVEHITTRGDIILDRPLNAIGDKGLFVVEIEEAMRAGRIDLAVHSAKDLPSVLPPDMTLAACPRRADPRDALVAQPGMTLAALPSGARVGTSSLRRACQLRALRPDLTLVDLRGNVDTRLRKLREGQYDAIVLAAAGLKRLGLDGAISELIEPDVLIPAVGQGVIGVEARADDEEVLRLLAPLDDQAARIAITAERAFLARIGGGCQVPVGALAHLEGDELLLRGMIGARDGRMVRGMQRGSASDPVGLGCALADELLDQGGRALLAG</sequence>
<proteinExistence type="inferred from homology"/>
<gene>
    <name evidence="1" type="primary">hemC</name>
    <name type="ordered locus">RoseRS_1750</name>
</gene>
<comment type="function">
    <text evidence="1">Tetrapolymerization of the monopyrrole PBG into the hydroxymethylbilane pre-uroporphyrinogen in several discrete steps.</text>
</comment>
<comment type="catalytic activity">
    <reaction evidence="1">
        <text>4 porphobilinogen + H2O = hydroxymethylbilane + 4 NH4(+)</text>
        <dbReference type="Rhea" id="RHEA:13185"/>
        <dbReference type="ChEBI" id="CHEBI:15377"/>
        <dbReference type="ChEBI" id="CHEBI:28938"/>
        <dbReference type="ChEBI" id="CHEBI:57845"/>
        <dbReference type="ChEBI" id="CHEBI:58126"/>
        <dbReference type="EC" id="2.5.1.61"/>
    </reaction>
</comment>
<comment type="cofactor">
    <cofactor evidence="1">
        <name>dipyrromethane</name>
        <dbReference type="ChEBI" id="CHEBI:60342"/>
    </cofactor>
    <text evidence="1">Binds 1 dipyrromethane group covalently.</text>
</comment>
<comment type="pathway">
    <text evidence="1">Porphyrin-containing compound metabolism; protoporphyrin-IX biosynthesis; coproporphyrinogen-III from 5-aminolevulinate: step 2/4.</text>
</comment>
<comment type="pathway">
    <text evidence="1">Porphyrin-containing compound metabolism; chlorophyll biosynthesis.</text>
</comment>
<comment type="subunit">
    <text evidence="1">Monomer.</text>
</comment>
<comment type="miscellaneous">
    <text evidence="1">The porphobilinogen subunits are added to the dipyrromethane group.</text>
</comment>
<comment type="similarity">
    <text evidence="1">Belongs to the HMBS family.</text>
</comment>
<protein>
    <recommendedName>
        <fullName evidence="1">Porphobilinogen deaminase</fullName>
        <shortName evidence="1">PBG</shortName>
        <ecNumber evidence="1">2.5.1.61</ecNumber>
    </recommendedName>
    <alternativeName>
        <fullName evidence="1">Hydroxymethylbilane synthase</fullName>
        <shortName evidence="1">HMBS</shortName>
    </alternativeName>
    <alternativeName>
        <fullName evidence="1">Pre-uroporphyrinogen synthase</fullName>
    </alternativeName>
</protein>
<dbReference type="EC" id="2.5.1.61" evidence="1"/>
<dbReference type="EMBL" id="CP000686">
    <property type="protein sequence ID" value="ABQ90140.1"/>
    <property type="molecule type" value="Genomic_DNA"/>
</dbReference>
<dbReference type="RefSeq" id="WP_011956487.1">
    <property type="nucleotide sequence ID" value="NC_009523.1"/>
</dbReference>
<dbReference type="SMR" id="A5UU37"/>
<dbReference type="STRING" id="357808.RoseRS_1750"/>
<dbReference type="KEGG" id="rrs:RoseRS_1750"/>
<dbReference type="eggNOG" id="COG0181">
    <property type="taxonomic scope" value="Bacteria"/>
</dbReference>
<dbReference type="HOGENOM" id="CLU_019704_0_2_0"/>
<dbReference type="OrthoDB" id="9810298at2"/>
<dbReference type="UniPathway" id="UPA00251">
    <property type="reaction ID" value="UER00319"/>
</dbReference>
<dbReference type="UniPathway" id="UPA00668"/>
<dbReference type="Proteomes" id="UP000006554">
    <property type="component" value="Chromosome"/>
</dbReference>
<dbReference type="GO" id="GO:0005737">
    <property type="term" value="C:cytoplasm"/>
    <property type="evidence" value="ECO:0007669"/>
    <property type="project" value="TreeGrafter"/>
</dbReference>
<dbReference type="GO" id="GO:0004418">
    <property type="term" value="F:hydroxymethylbilane synthase activity"/>
    <property type="evidence" value="ECO:0007669"/>
    <property type="project" value="UniProtKB-UniRule"/>
</dbReference>
<dbReference type="GO" id="GO:0015995">
    <property type="term" value="P:chlorophyll biosynthetic process"/>
    <property type="evidence" value="ECO:0007669"/>
    <property type="project" value="UniProtKB-UniRule"/>
</dbReference>
<dbReference type="GO" id="GO:0006782">
    <property type="term" value="P:protoporphyrinogen IX biosynthetic process"/>
    <property type="evidence" value="ECO:0007669"/>
    <property type="project" value="UniProtKB-UniRule"/>
</dbReference>
<dbReference type="CDD" id="cd13646">
    <property type="entry name" value="PBP2_EcHMBS_like"/>
    <property type="match status" value="1"/>
</dbReference>
<dbReference type="FunFam" id="3.40.190.10:FF:000004">
    <property type="entry name" value="Porphobilinogen deaminase"/>
    <property type="match status" value="1"/>
</dbReference>
<dbReference type="FunFam" id="3.40.190.10:FF:000005">
    <property type="entry name" value="Porphobilinogen deaminase"/>
    <property type="match status" value="1"/>
</dbReference>
<dbReference type="Gene3D" id="3.40.190.10">
    <property type="entry name" value="Periplasmic binding protein-like II"/>
    <property type="match status" value="2"/>
</dbReference>
<dbReference type="Gene3D" id="3.30.160.40">
    <property type="entry name" value="Porphobilinogen deaminase, C-terminal domain"/>
    <property type="match status" value="1"/>
</dbReference>
<dbReference type="HAMAP" id="MF_00260">
    <property type="entry name" value="Porphobil_deam"/>
    <property type="match status" value="1"/>
</dbReference>
<dbReference type="InterPro" id="IPR000860">
    <property type="entry name" value="HemC"/>
</dbReference>
<dbReference type="InterPro" id="IPR022419">
    <property type="entry name" value="Porphobilin_deaminase_cofac_BS"/>
</dbReference>
<dbReference type="InterPro" id="IPR022417">
    <property type="entry name" value="Porphobilin_deaminase_N"/>
</dbReference>
<dbReference type="InterPro" id="IPR022418">
    <property type="entry name" value="Porphobilinogen_deaminase_C"/>
</dbReference>
<dbReference type="InterPro" id="IPR036803">
    <property type="entry name" value="Porphobilinogen_deaminase_C_sf"/>
</dbReference>
<dbReference type="NCBIfam" id="TIGR00212">
    <property type="entry name" value="hemC"/>
    <property type="match status" value="1"/>
</dbReference>
<dbReference type="PANTHER" id="PTHR11557">
    <property type="entry name" value="PORPHOBILINOGEN DEAMINASE"/>
    <property type="match status" value="1"/>
</dbReference>
<dbReference type="PANTHER" id="PTHR11557:SF0">
    <property type="entry name" value="PORPHOBILINOGEN DEAMINASE"/>
    <property type="match status" value="1"/>
</dbReference>
<dbReference type="Pfam" id="PF01379">
    <property type="entry name" value="Porphobil_deam"/>
    <property type="match status" value="1"/>
</dbReference>
<dbReference type="Pfam" id="PF03900">
    <property type="entry name" value="Porphobil_deamC"/>
    <property type="match status" value="1"/>
</dbReference>
<dbReference type="PIRSF" id="PIRSF001438">
    <property type="entry name" value="4pyrrol_synth_OHMeBilane_synth"/>
    <property type="match status" value="1"/>
</dbReference>
<dbReference type="PRINTS" id="PR00151">
    <property type="entry name" value="PORPHBDMNASE"/>
</dbReference>
<dbReference type="SUPFAM" id="SSF53850">
    <property type="entry name" value="Periplasmic binding protein-like II"/>
    <property type="match status" value="1"/>
</dbReference>
<dbReference type="SUPFAM" id="SSF54782">
    <property type="entry name" value="Porphobilinogen deaminase (hydroxymethylbilane synthase), C-terminal domain"/>
    <property type="match status" value="1"/>
</dbReference>
<dbReference type="PROSITE" id="PS00533">
    <property type="entry name" value="PORPHOBILINOGEN_DEAM"/>
    <property type="match status" value="1"/>
</dbReference>
<keyword id="KW-0149">Chlorophyll biosynthesis</keyword>
<keyword id="KW-0627">Porphyrin biosynthesis</keyword>
<keyword id="KW-0808">Transferase</keyword>